<feature type="signal peptide" evidence="6">
    <location>
        <begin position="1"/>
        <end position="19"/>
    </location>
</feature>
<feature type="chain" id="PRO_5008172703" description="Primary amine oxidase 1">
    <location>
        <begin position="20"/>
        <end position="650"/>
    </location>
</feature>
<feature type="active site" description="Proton acceptor" evidence="3">
    <location>
        <position position="310"/>
    </location>
</feature>
<feature type="active site" description="Schiff-base intermediate with substrate; via topaquinone" evidence="3">
    <location>
        <position position="398"/>
    </location>
</feature>
<feature type="binding site" evidence="3">
    <location>
        <begin position="308"/>
        <end position="319"/>
    </location>
    <ligand>
        <name>substrate</name>
    </ligand>
</feature>
<feature type="binding site" evidence="4">
    <location>
        <begin position="395"/>
        <end position="400"/>
    </location>
    <ligand>
        <name>substrate</name>
    </ligand>
</feature>
<feature type="binding site" evidence="3">
    <location>
        <position position="453"/>
    </location>
    <ligand>
        <name>Cu cation</name>
        <dbReference type="ChEBI" id="CHEBI:23378"/>
    </ligand>
</feature>
<feature type="binding site" evidence="3">
    <location>
        <position position="455"/>
    </location>
    <ligand>
        <name>Cu cation</name>
        <dbReference type="ChEBI" id="CHEBI:23378"/>
    </ligand>
</feature>
<feature type="binding site" evidence="5">
    <location>
        <position position="462"/>
    </location>
    <ligand>
        <name>Mn(2+)</name>
        <dbReference type="ChEBI" id="CHEBI:29035"/>
    </ligand>
</feature>
<feature type="binding site" evidence="5">
    <location>
        <position position="464"/>
    </location>
    <ligand>
        <name>Mn(2+)</name>
        <dbReference type="ChEBI" id="CHEBI:29035"/>
    </ligand>
</feature>
<feature type="binding site" evidence="5">
    <location>
        <position position="607"/>
    </location>
    <ligand>
        <name>Mn(2+)</name>
        <dbReference type="ChEBI" id="CHEBI:29035"/>
    </ligand>
</feature>
<feature type="binding site" evidence="5">
    <location>
        <position position="608"/>
    </location>
    <ligand>
        <name>Mn(2+)</name>
        <dbReference type="ChEBI" id="CHEBI:29035"/>
    </ligand>
</feature>
<feature type="binding site" evidence="3">
    <location>
        <position position="618"/>
    </location>
    <ligand>
        <name>Cu cation</name>
        <dbReference type="ChEBI" id="CHEBI:23378"/>
    </ligand>
</feature>
<feature type="modified residue" description="2',4',5'-topaquinone" evidence="3">
    <location>
        <position position="398"/>
    </location>
</feature>
<feature type="glycosylation site" description="N-linked (GlcNAc...) asparagine" evidence="7">
    <location>
        <position position="2"/>
    </location>
</feature>
<feature type="glycosylation site" description="N-linked (GlcNAc...) asparagine" evidence="7">
    <location>
        <position position="34"/>
    </location>
</feature>
<feature type="glycosylation site" description="N-linked (GlcNAc...) asparagine" evidence="7">
    <location>
        <position position="62"/>
    </location>
</feature>
<feature type="glycosylation site" description="N-linked (GlcNAc...) asparagine" evidence="7">
    <location>
        <position position="149"/>
    </location>
</feature>
<feature type="glycosylation site" description="N-linked (GlcNAc...) asparagine" evidence="7">
    <location>
        <position position="235"/>
    </location>
</feature>
<feature type="glycosylation site" description="N-linked (GlcNAc...) asparagine" evidence="7">
    <location>
        <position position="486"/>
    </location>
</feature>
<feature type="disulfide bond" evidence="1">
    <location>
        <begin position="155"/>
        <end position="176"/>
    </location>
</feature>
<feature type="disulfide bond" evidence="3">
    <location>
        <begin position="329"/>
        <end position="355"/>
    </location>
</feature>
<feature type="sequence conflict" description="In Ref. 1; AAB87690." evidence="11" ref="1">
    <original>T</original>
    <variation>I</variation>
    <location>
        <position position="103"/>
    </location>
</feature>
<feature type="sequence conflict" description="In Ref. 1; AAB87690." evidence="11" ref="1">
    <original>V</original>
    <variation>I</variation>
    <location>
        <position position="195"/>
    </location>
</feature>
<feature type="sequence conflict" description="In Ref. 1; AAB87690." evidence="11" ref="1">
    <original>I</original>
    <variation>V</variation>
    <location>
        <position position="205"/>
    </location>
</feature>
<feature type="sequence conflict" description="In Ref. 1; AAB87690." evidence="11" ref="1">
    <original>IPD</original>
    <variation>LPE</variation>
    <location>
        <begin position="215"/>
        <end position="217"/>
    </location>
</feature>
<feature type="sequence conflict" description="In Ref. 1; AAB87690." evidence="11" ref="1">
    <original>TKHRPFPFF</original>
    <variation>KKHKPFPFS</variation>
    <location>
        <begin position="225"/>
        <end position="233"/>
    </location>
</feature>
<feature type="sequence conflict" description="In Ref. 1; AAB87690." evidence="11" ref="1">
    <original>L</original>
    <variation>F</variation>
    <location>
        <position position="336"/>
    </location>
</feature>
<feature type="sequence conflict" description="In Ref. 1; AAB87690." evidence="11" ref="1">
    <original>E</original>
    <variation>A</variation>
    <location>
        <position position="382"/>
    </location>
</feature>
<feature type="sequence conflict" description="In Ref. 1; AAB87690." evidence="11" ref="1">
    <original>N</original>
    <variation>S</variation>
    <location>
        <position position="409"/>
    </location>
</feature>
<feature type="sequence conflict" description="In Ref. 1; AAB87690." evidence="11" ref="1">
    <original>D</original>
    <variation>E</variation>
    <location>
        <position position="433"/>
    </location>
</feature>
<feature type="sequence conflict" description="In Ref. 1; AAB87690." evidence="11" ref="1">
    <original>L</original>
    <variation>Q</variation>
    <location>
        <position position="443"/>
    </location>
</feature>
<feature type="sequence conflict" description="In Ref. 1; AAB87690." evidence="11" ref="1">
    <original>E</original>
    <variation>D</variation>
    <location>
        <position position="484"/>
    </location>
</feature>
<feature type="sequence conflict" description="In Ref. 1; AAB87690." evidence="11" ref="1">
    <original>D</original>
    <variation>E</variation>
    <location>
        <position position="516"/>
    </location>
</feature>
<feature type="sequence conflict" description="In Ref. 1; AAB87690." evidence="11" ref="1">
    <original>Q</original>
    <variation>P</variation>
    <location>
        <position position="545"/>
    </location>
</feature>
<feature type="sequence conflict" description="In Ref. 1; AAB87690." evidence="11" ref="1">
    <original>L</original>
    <variation>I</variation>
    <location>
        <position position="558"/>
    </location>
</feature>
<proteinExistence type="evidence at protein level"/>
<organism>
    <name type="scientific">Arabidopsis thaliana</name>
    <name type="common">Mouse-ear cress</name>
    <dbReference type="NCBI Taxonomy" id="3702"/>
    <lineage>
        <taxon>Eukaryota</taxon>
        <taxon>Viridiplantae</taxon>
        <taxon>Streptophyta</taxon>
        <taxon>Embryophyta</taxon>
        <taxon>Tracheophyta</taxon>
        <taxon>Spermatophyta</taxon>
        <taxon>Magnoliopsida</taxon>
        <taxon>eudicotyledons</taxon>
        <taxon>Gunneridae</taxon>
        <taxon>Pentapetalae</taxon>
        <taxon>rosids</taxon>
        <taxon>malvids</taxon>
        <taxon>Brassicales</taxon>
        <taxon>Brassicaceae</taxon>
        <taxon>Camelineae</taxon>
        <taxon>Arabidopsis</taxon>
    </lineage>
</organism>
<dbReference type="EC" id="1.4.3.21" evidence="9"/>
<dbReference type="EMBL" id="AF034579">
    <property type="protein sequence ID" value="AAB87690.1"/>
    <property type="status" value="ALT_INIT"/>
    <property type="molecule type" value="Genomic_DNA"/>
</dbReference>
<dbReference type="EMBL" id="Z97337">
    <property type="protein sequence ID" value="CAB10273.1"/>
    <property type="molecule type" value="Genomic_DNA"/>
</dbReference>
<dbReference type="EMBL" id="AL161540">
    <property type="protein sequence ID" value="CAB78536.1"/>
    <property type="molecule type" value="Genomic_DNA"/>
</dbReference>
<dbReference type="EMBL" id="CP002687">
    <property type="protein sequence ID" value="AEE83525.1"/>
    <property type="molecule type" value="Genomic_DNA"/>
</dbReference>
<dbReference type="PIR" id="G71412">
    <property type="entry name" value="G71412"/>
</dbReference>
<dbReference type="RefSeq" id="NP_193230.1">
    <property type="nucleotide sequence ID" value="NM_117580.2"/>
</dbReference>
<dbReference type="SMR" id="O23349"/>
<dbReference type="FunCoup" id="O23349">
    <property type="interactions" value="119"/>
</dbReference>
<dbReference type="STRING" id="3702.O23349"/>
<dbReference type="GlyCosmos" id="O23349">
    <property type="glycosylation" value="6 sites, No reported glycans"/>
</dbReference>
<dbReference type="GlyGen" id="O23349">
    <property type="glycosylation" value="6 sites"/>
</dbReference>
<dbReference type="iPTMnet" id="O23349"/>
<dbReference type="PaxDb" id="3702-AT4G14940.1"/>
<dbReference type="ProteomicsDB" id="245008"/>
<dbReference type="EnsemblPlants" id="AT4G14940.1">
    <property type="protein sequence ID" value="AT4G14940.1"/>
    <property type="gene ID" value="AT4G14940"/>
</dbReference>
<dbReference type="GeneID" id="827152"/>
<dbReference type="Gramene" id="AT4G14940.1">
    <property type="protein sequence ID" value="AT4G14940.1"/>
    <property type="gene ID" value="AT4G14940"/>
</dbReference>
<dbReference type="KEGG" id="ath:AT4G14940"/>
<dbReference type="Araport" id="AT4G14940"/>
<dbReference type="TAIR" id="AT4G14940">
    <property type="gene designation" value="AO1"/>
</dbReference>
<dbReference type="eggNOG" id="KOG1186">
    <property type="taxonomic scope" value="Eukaryota"/>
</dbReference>
<dbReference type="HOGENOM" id="CLU_011500_5_4_1"/>
<dbReference type="InParanoid" id="O23349"/>
<dbReference type="OMA" id="VPHYSQM"/>
<dbReference type="PhylomeDB" id="O23349"/>
<dbReference type="BioCyc" id="MetaCyc:AT4G14940-MONOMER"/>
<dbReference type="PRO" id="PR:O23349"/>
<dbReference type="Proteomes" id="UP000006548">
    <property type="component" value="Chromosome 4"/>
</dbReference>
<dbReference type="ExpressionAtlas" id="O23349">
    <property type="expression patterns" value="baseline and differential"/>
</dbReference>
<dbReference type="GO" id="GO:0005576">
    <property type="term" value="C:extracellular region"/>
    <property type="evidence" value="ECO:0007669"/>
    <property type="project" value="UniProtKB-SubCell"/>
</dbReference>
<dbReference type="GO" id="GO:0005507">
    <property type="term" value="F:copper ion binding"/>
    <property type="evidence" value="ECO:0007669"/>
    <property type="project" value="InterPro"/>
</dbReference>
<dbReference type="GO" id="GO:0008131">
    <property type="term" value="F:primary methylamine oxidase activity"/>
    <property type="evidence" value="ECO:0000314"/>
    <property type="project" value="TAIR"/>
</dbReference>
<dbReference type="GO" id="GO:0048038">
    <property type="term" value="F:quinone binding"/>
    <property type="evidence" value="ECO:0007669"/>
    <property type="project" value="InterPro"/>
</dbReference>
<dbReference type="GO" id="GO:0009308">
    <property type="term" value="P:amine metabolic process"/>
    <property type="evidence" value="ECO:0007669"/>
    <property type="project" value="InterPro"/>
</dbReference>
<dbReference type="GO" id="GO:0009867">
    <property type="term" value="P:jasmonic acid mediated signaling pathway"/>
    <property type="evidence" value="ECO:0000315"/>
    <property type="project" value="UniProtKB"/>
</dbReference>
<dbReference type="GO" id="GO:0090059">
    <property type="term" value="P:protoxylem development"/>
    <property type="evidence" value="ECO:0000315"/>
    <property type="project" value="UniProtKB"/>
</dbReference>
<dbReference type="GO" id="GO:0043067">
    <property type="term" value="P:regulation of programmed cell death"/>
    <property type="evidence" value="ECO:0000270"/>
    <property type="project" value="UniProtKB"/>
</dbReference>
<dbReference type="GO" id="GO:0009753">
    <property type="term" value="P:response to jasmonic acid"/>
    <property type="evidence" value="ECO:0000270"/>
    <property type="project" value="UniProtKB"/>
</dbReference>
<dbReference type="FunFam" id="2.70.98.20:FF:000008">
    <property type="entry name" value="Amine oxidase"/>
    <property type="match status" value="1"/>
</dbReference>
<dbReference type="FunFam" id="3.10.450.40:FF:000005">
    <property type="entry name" value="Amine oxidase"/>
    <property type="match status" value="1"/>
</dbReference>
<dbReference type="FunFam" id="3.10.450.40:FF:000012">
    <property type="entry name" value="Amine oxidase"/>
    <property type="match status" value="1"/>
</dbReference>
<dbReference type="Gene3D" id="3.10.450.40">
    <property type="match status" value="2"/>
</dbReference>
<dbReference type="Gene3D" id="2.70.98.20">
    <property type="entry name" value="Copper amine oxidase, catalytic domain"/>
    <property type="match status" value="1"/>
</dbReference>
<dbReference type="InterPro" id="IPR049948">
    <property type="entry name" value="Cu_Am_ox_TPQ-bd"/>
</dbReference>
<dbReference type="InterPro" id="IPR000269">
    <property type="entry name" value="Cu_amine_oxidase"/>
</dbReference>
<dbReference type="InterPro" id="IPR015798">
    <property type="entry name" value="Cu_amine_oxidase_C"/>
</dbReference>
<dbReference type="InterPro" id="IPR036460">
    <property type="entry name" value="Cu_amine_oxidase_C_sf"/>
</dbReference>
<dbReference type="InterPro" id="IPR016182">
    <property type="entry name" value="Cu_amine_oxidase_N-reg"/>
</dbReference>
<dbReference type="InterPro" id="IPR015800">
    <property type="entry name" value="Cu_amine_oxidase_N2"/>
</dbReference>
<dbReference type="InterPro" id="IPR015802">
    <property type="entry name" value="Cu_amine_oxidase_N3"/>
</dbReference>
<dbReference type="PANTHER" id="PTHR10638">
    <property type="entry name" value="COPPER AMINE OXIDASE"/>
    <property type="match status" value="1"/>
</dbReference>
<dbReference type="PANTHER" id="PTHR10638:SF40">
    <property type="entry name" value="PRIMARY AMINE OXIDASE 1"/>
    <property type="match status" value="1"/>
</dbReference>
<dbReference type="Pfam" id="PF01179">
    <property type="entry name" value="Cu_amine_oxid"/>
    <property type="match status" value="1"/>
</dbReference>
<dbReference type="Pfam" id="PF02727">
    <property type="entry name" value="Cu_amine_oxidN2"/>
    <property type="match status" value="1"/>
</dbReference>
<dbReference type="Pfam" id="PF02728">
    <property type="entry name" value="Cu_amine_oxidN3"/>
    <property type="match status" value="1"/>
</dbReference>
<dbReference type="SUPFAM" id="SSF49998">
    <property type="entry name" value="Amine oxidase catalytic domain"/>
    <property type="match status" value="1"/>
</dbReference>
<dbReference type="SUPFAM" id="SSF54416">
    <property type="entry name" value="Amine oxidase N-terminal region"/>
    <property type="match status" value="2"/>
</dbReference>
<dbReference type="PROSITE" id="PS01164">
    <property type="entry name" value="COPPER_AMINE_OXID_1"/>
    <property type="match status" value="1"/>
</dbReference>
<name>AO1_ARATH</name>
<protein>
    <recommendedName>
        <fullName evidence="10">Primary amine oxidase 1</fullName>
        <shortName evidence="10">AtAO1</shortName>
        <ecNumber evidence="9">1.4.3.21</ecNumber>
    </recommendedName>
</protein>
<keyword id="KW-0053">Apoptosis</keyword>
<keyword id="KW-0186">Copper</keyword>
<keyword id="KW-1015">Disulfide bond</keyword>
<keyword id="KW-0325">Glycoprotein</keyword>
<keyword id="KW-1184">Jasmonic acid signaling pathway</keyword>
<keyword id="KW-0464">Manganese</keyword>
<keyword id="KW-0479">Metal-binding</keyword>
<keyword id="KW-0560">Oxidoreductase</keyword>
<keyword id="KW-1185">Reference proteome</keyword>
<keyword id="KW-0964">Secreted</keyword>
<keyword id="KW-0732">Signal</keyword>
<keyword id="KW-0801">TPQ</keyword>
<sequence>MNTSILAILFLIQCVFTLGLHFHPLDPLTPQEINKTSFIVKKSHLGNLKDLTFHYLDLEEPNKSHVLQWLSPNPSKKPPPPRRRSFVVVRAGGQTYELIIDLTTSKIASSRIYTGHGFPSFTFIELFKASKLPLTYPPFKKSILDRSLNISEVSCIPFTVGWYGETTTRRELKASCFYRDGSVNVFTRPIEGITVTIDVDSMQVIKYSDRFRKPIPDKEGNDFRTKHRPFPFFCNVSDTGFKILGNRVKWANWKFHVGFTARAGVTISTASVLDPRTKRFRRVMYRGHVSETFVPYMDPTYEWYYRTFMDIGEFGFGRSAVNLQPLIDCPQNAAFLDGHVAGPDGTAQKMTNVMCVFEKNGYGASFRHTEINVPGQVITSGEAEISLVVRMVATLGNYDYIVDWEFKKNGAIRVGVDLTGVLEVKATSYTSNDQITENVYGTLVAKNTIAVNHDHYLTYYLDLDVDGNGNSLVKAKLKTVRVTEVNKTSSRRKSYWTVVKETAKTEADGRVRLGSDPVELLIVNPNKKTKIGNTVGYRLIPEHLQATSLLTDDDYPELRAGYTKYPVWVTAYDRSERWAGGFYSDRSRGDDGLAVWSSRNREIENKDIVMWYNVGFHHIPYQEDFPVMPTLHGGFTLRPSNFFDNDPLIG</sequence>
<accession>O23349</accession>
<accession>O48552</accession>
<evidence type="ECO:0000250" key="1"/>
<evidence type="ECO:0000250" key="2">
    <source>
        <dbReference type="UniProtKB" id="H2A0M3"/>
    </source>
</evidence>
<evidence type="ECO:0000250" key="3">
    <source>
        <dbReference type="UniProtKB" id="P12807"/>
    </source>
</evidence>
<evidence type="ECO:0000250" key="4">
    <source>
        <dbReference type="UniProtKB" id="P46883"/>
    </source>
</evidence>
<evidence type="ECO:0000250" key="5">
    <source>
        <dbReference type="UniProtKB" id="Q43077"/>
    </source>
</evidence>
<evidence type="ECO:0000255" key="6"/>
<evidence type="ECO:0000255" key="7">
    <source>
        <dbReference type="PROSITE-ProRule" id="PRU00498"/>
    </source>
</evidence>
<evidence type="ECO:0000269" key="8">
    <source>
    </source>
</evidence>
<evidence type="ECO:0000269" key="9">
    <source>
    </source>
</evidence>
<evidence type="ECO:0000303" key="10">
    <source>
    </source>
</evidence>
<evidence type="ECO:0000305" key="11"/>
<evidence type="ECO:0000312" key="12">
    <source>
        <dbReference type="Araport" id="AT4G14940"/>
    </source>
</evidence>
<evidence type="ECO:0000312" key="13">
    <source>
        <dbReference type="EMBL" id="CAB10273.1"/>
    </source>
</evidence>
<evidence type="ECO:0000312" key="14">
    <source>
        <dbReference type="EMBL" id="CAB78536.1"/>
    </source>
</evidence>
<comment type="function">
    <text evidence="8 9">Oxidizes preferentially the aliphatic diamine putrescine with production of the corresponding aldehyde, ammonia and hydrogen peroxide. May be involved in the regulation of developmental programmed cell death (PCD) in both vascular tissue and the root cap (PubMed:9681017). Required for jasmonic acid-(MeJA) mediated early protoxylem differentiation associated with putrescine levels reduction and H(2)O(2) accumulation in roots (PubMed:25883242).</text>
</comment>
<comment type="catalytic activity">
    <reaction evidence="9">
        <text>a primary methyl amine + O2 + H2O = an aldehyde + H2O2 + NH4(+)</text>
        <dbReference type="Rhea" id="RHEA:16153"/>
        <dbReference type="ChEBI" id="CHEBI:15377"/>
        <dbReference type="ChEBI" id="CHEBI:15379"/>
        <dbReference type="ChEBI" id="CHEBI:16240"/>
        <dbReference type="ChEBI" id="CHEBI:17478"/>
        <dbReference type="ChEBI" id="CHEBI:28938"/>
        <dbReference type="ChEBI" id="CHEBI:228804"/>
        <dbReference type="EC" id="1.4.3.21"/>
    </reaction>
</comment>
<comment type="cofactor">
    <cofactor evidence="4">
        <name>L-topaquinone</name>
        <dbReference type="ChEBI" id="CHEBI:79027"/>
    </cofactor>
    <text evidence="4">Contains 1 topaquinone per subunit.</text>
</comment>
<comment type="cofactor">
    <cofactor evidence="4">
        <name>Cu cation</name>
        <dbReference type="ChEBI" id="CHEBI:23378"/>
    </cofactor>
    <cofactor evidence="3">
        <name>Zn(2+)</name>
        <dbReference type="ChEBI" id="CHEBI:29105"/>
    </cofactor>
    <text evidence="3 4">Binds 1 copper ion per subunit (By similarity). Can also use zinc ion as cofactor (By similarity).</text>
</comment>
<comment type="cofactor">
    <cofactor evidence="5">
        <name>Mn(2+)</name>
        <dbReference type="ChEBI" id="CHEBI:29035"/>
    </cofactor>
    <text evidence="5">Binds 1 Mn(2+) ion per subunit.</text>
</comment>
<comment type="activity regulation">
    <text evidence="9">Repressed by semi-carbazide, a specific and irreversible inhibitor of copper amine oxidases.</text>
</comment>
<comment type="subunit">
    <text evidence="4">Homodimer.</text>
</comment>
<comment type="subcellular location">
    <subcellularLocation>
        <location evidence="2">Secreted</location>
    </subcellularLocation>
</comment>
<comment type="tissue specificity">
    <text evidence="8">Expressed in the vascular tissues at the division/differentiation transition zone.</text>
</comment>
<comment type="developmental stage">
    <text evidence="8 9">Levels peak 3-4 days after germination. Expressed following temporally and spatially discrete patterns of gene expression in lateral root cap cells, vascular tissue of roots, developing leaves, the hypocotyl, and in the style/stigmatal tissue (PubMed:9681017). Expressed at the early stages of vascular tissue differentiation in roots; strong accumulation in the protoxylem at the transition, elongation, and maturation zones (PubMed:25883242). Accumulates in developing tracheary elements before lignification. Present in cells destined to undergo programmed cell death (PCD) in both vascular tissue and the root cap. In flowers, restricted spatial and temporal distribution; at stage 11-13, after papillae formation, accumulates in tracheary elements of style and stigmate (PubMed:9681017).</text>
</comment>
<comment type="induction">
    <text evidence="8">Induced by jasmonic acid (MeJA) in vascular tissues, especially at the transition and elongation zones.</text>
</comment>
<comment type="PTM">
    <text evidence="4">Topaquinone (TPQ) is generated by copper-dependent autoxidation of a specific tyrosyl residue.</text>
</comment>
<comment type="disruption phenotype">
    <text evidence="8">Impaired sensitivity to jasmonic acid (MeJA).</text>
</comment>
<comment type="similarity">
    <text evidence="11">Belongs to the copper/topaquinone oxidase family.</text>
</comment>
<comment type="sequence caution" evidence="11">
    <conflict type="erroneous initiation">
        <sequence resource="EMBL-CDS" id="AAB87690"/>
    </conflict>
    <text>Extended N-terminus.</text>
</comment>
<reference key="1">
    <citation type="journal article" date="1998" name="Plant J.">
        <title>Developmental expression and biochemical analysis of the Arabidopsis atao1 gene encoding an H2O2-generating diamine oxidase.</title>
        <authorList>
            <person name="Moeller S.G."/>
            <person name="McPherson M.J."/>
        </authorList>
    </citation>
    <scope>NUCLEOTIDE SEQUENCE [GENOMIC DNA]</scope>
    <scope>FUNCTION</scope>
    <scope>CATALYTIC ACTIVITY</scope>
    <scope>DEVELOPMENTAL STAGE</scope>
    <scope>ACTIVITY REGULATION</scope>
    <source>
        <strain>cv. Landsberg erecta</strain>
    </source>
</reference>
<reference key="2">
    <citation type="journal article" date="1998" name="Nature">
        <title>Analysis of 1.9 Mb of contiguous sequence from chromosome 4 of Arabidopsis thaliana.</title>
        <authorList>
            <person name="Bevan M."/>
            <person name="Bancroft I."/>
            <person name="Bent E."/>
            <person name="Love K."/>
            <person name="Goodman H.M."/>
            <person name="Dean C."/>
            <person name="Bergkamp R."/>
            <person name="Dirkse W."/>
            <person name="van Staveren M."/>
            <person name="Stiekema W."/>
            <person name="Drost L."/>
            <person name="Ridley P."/>
            <person name="Hudson S.-A."/>
            <person name="Patel K."/>
            <person name="Murphy G."/>
            <person name="Piffanelli P."/>
            <person name="Wedler H."/>
            <person name="Wedler E."/>
            <person name="Wambutt R."/>
            <person name="Weitzenegger T."/>
            <person name="Pohl T."/>
            <person name="Terryn N."/>
            <person name="Gielen J."/>
            <person name="Villarroel R."/>
            <person name="De Clercq R."/>
            <person name="van Montagu M."/>
            <person name="Lecharny A."/>
            <person name="Aubourg S."/>
            <person name="Gy I."/>
            <person name="Kreis M."/>
            <person name="Lao N."/>
            <person name="Kavanagh T."/>
            <person name="Hempel S."/>
            <person name="Kotter P."/>
            <person name="Entian K.-D."/>
            <person name="Rieger M."/>
            <person name="Schaefer M."/>
            <person name="Funk B."/>
            <person name="Mueller-Auer S."/>
            <person name="Silvey M."/>
            <person name="James R."/>
            <person name="Monfort A."/>
            <person name="Pons A."/>
            <person name="Puigdomenech P."/>
            <person name="Douka A."/>
            <person name="Voukelatou E."/>
            <person name="Milioni D."/>
            <person name="Hatzopoulos P."/>
            <person name="Piravandi E."/>
            <person name="Obermaier B."/>
            <person name="Hilbert H."/>
            <person name="Duesterhoeft A."/>
            <person name="Moores T."/>
            <person name="Jones J.D.G."/>
            <person name="Eneva T."/>
            <person name="Palme K."/>
            <person name="Benes V."/>
            <person name="Rechmann S."/>
            <person name="Ansorge W."/>
            <person name="Cooke R."/>
            <person name="Berger C."/>
            <person name="Delseny M."/>
            <person name="Voet M."/>
            <person name="Volckaert G."/>
            <person name="Mewes H.-W."/>
            <person name="Klosterman S."/>
            <person name="Schueller C."/>
            <person name="Chalwatzis N."/>
        </authorList>
    </citation>
    <scope>NUCLEOTIDE SEQUENCE [LARGE SCALE GENOMIC DNA]</scope>
    <source>
        <strain>cv. Columbia</strain>
    </source>
</reference>
<reference key="3">
    <citation type="journal article" date="1999" name="Nature">
        <title>Sequence and analysis of chromosome 4 of the plant Arabidopsis thaliana.</title>
        <authorList>
            <person name="Mayer K.F.X."/>
            <person name="Schueller C."/>
            <person name="Wambutt R."/>
            <person name="Murphy G."/>
            <person name="Volckaert G."/>
            <person name="Pohl T."/>
            <person name="Duesterhoeft A."/>
            <person name="Stiekema W."/>
            <person name="Entian K.-D."/>
            <person name="Terryn N."/>
            <person name="Harris B."/>
            <person name="Ansorge W."/>
            <person name="Brandt P."/>
            <person name="Grivell L.A."/>
            <person name="Rieger M."/>
            <person name="Weichselgartner M."/>
            <person name="de Simone V."/>
            <person name="Obermaier B."/>
            <person name="Mache R."/>
            <person name="Mueller M."/>
            <person name="Kreis M."/>
            <person name="Delseny M."/>
            <person name="Puigdomenech P."/>
            <person name="Watson M."/>
            <person name="Schmidtheini T."/>
            <person name="Reichert B."/>
            <person name="Portetelle D."/>
            <person name="Perez-Alonso M."/>
            <person name="Boutry M."/>
            <person name="Bancroft I."/>
            <person name="Vos P."/>
            <person name="Hoheisel J."/>
            <person name="Zimmermann W."/>
            <person name="Wedler H."/>
            <person name="Ridley P."/>
            <person name="Langham S.-A."/>
            <person name="McCullagh B."/>
            <person name="Bilham L."/>
            <person name="Robben J."/>
            <person name="van der Schueren J."/>
            <person name="Grymonprez B."/>
            <person name="Chuang Y.-J."/>
            <person name="Vandenbussche F."/>
            <person name="Braeken M."/>
            <person name="Weltjens I."/>
            <person name="Voet M."/>
            <person name="Bastiaens I."/>
            <person name="Aert R."/>
            <person name="Defoor E."/>
            <person name="Weitzenegger T."/>
            <person name="Bothe G."/>
            <person name="Ramsperger U."/>
            <person name="Hilbert H."/>
            <person name="Braun M."/>
            <person name="Holzer E."/>
            <person name="Brandt A."/>
            <person name="Peters S."/>
            <person name="van Staveren M."/>
            <person name="Dirkse W."/>
            <person name="Mooijman P."/>
            <person name="Klein Lankhorst R."/>
            <person name="Rose M."/>
            <person name="Hauf J."/>
            <person name="Koetter P."/>
            <person name="Berneiser S."/>
            <person name="Hempel S."/>
            <person name="Feldpausch M."/>
            <person name="Lamberth S."/>
            <person name="Van den Daele H."/>
            <person name="De Keyser A."/>
            <person name="Buysshaert C."/>
            <person name="Gielen J."/>
            <person name="Villarroel R."/>
            <person name="De Clercq R."/>
            <person name="van Montagu M."/>
            <person name="Rogers J."/>
            <person name="Cronin A."/>
            <person name="Quail M.A."/>
            <person name="Bray-Allen S."/>
            <person name="Clark L."/>
            <person name="Doggett J."/>
            <person name="Hall S."/>
            <person name="Kay M."/>
            <person name="Lennard N."/>
            <person name="McLay K."/>
            <person name="Mayes R."/>
            <person name="Pettett A."/>
            <person name="Rajandream M.A."/>
            <person name="Lyne M."/>
            <person name="Benes V."/>
            <person name="Rechmann S."/>
            <person name="Borkova D."/>
            <person name="Bloecker H."/>
            <person name="Scharfe M."/>
            <person name="Grimm M."/>
            <person name="Loehnert T.-H."/>
            <person name="Dose S."/>
            <person name="de Haan M."/>
            <person name="Maarse A.C."/>
            <person name="Schaefer M."/>
            <person name="Mueller-Auer S."/>
            <person name="Gabel C."/>
            <person name="Fuchs M."/>
            <person name="Fartmann B."/>
            <person name="Granderath K."/>
            <person name="Dauner D."/>
            <person name="Herzl A."/>
            <person name="Neumann S."/>
            <person name="Argiriou A."/>
            <person name="Vitale D."/>
            <person name="Liguori R."/>
            <person name="Piravandi E."/>
            <person name="Massenet O."/>
            <person name="Quigley F."/>
            <person name="Clabauld G."/>
            <person name="Muendlein A."/>
            <person name="Felber R."/>
            <person name="Schnabl S."/>
            <person name="Hiller R."/>
            <person name="Schmidt W."/>
            <person name="Lecharny A."/>
            <person name="Aubourg S."/>
            <person name="Chefdor F."/>
            <person name="Cooke R."/>
            <person name="Berger C."/>
            <person name="Monfort A."/>
            <person name="Casacuberta E."/>
            <person name="Gibbons T."/>
            <person name="Weber N."/>
            <person name="Vandenbol M."/>
            <person name="Bargues M."/>
            <person name="Terol J."/>
            <person name="Torres A."/>
            <person name="Perez-Perez A."/>
            <person name="Purnelle B."/>
            <person name="Bent E."/>
            <person name="Johnson S."/>
            <person name="Tacon D."/>
            <person name="Jesse T."/>
            <person name="Heijnen L."/>
            <person name="Schwarz S."/>
            <person name="Scholler P."/>
            <person name="Heber S."/>
            <person name="Francs P."/>
            <person name="Bielke C."/>
            <person name="Frishman D."/>
            <person name="Haase D."/>
            <person name="Lemcke K."/>
            <person name="Mewes H.-W."/>
            <person name="Stocker S."/>
            <person name="Zaccaria P."/>
            <person name="Bevan M."/>
            <person name="Wilson R.K."/>
            <person name="de la Bastide M."/>
            <person name="Habermann K."/>
            <person name="Parnell L."/>
            <person name="Dedhia N."/>
            <person name="Gnoj L."/>
            <person name="Schutz K."/>
            <person name="Huang E."/>
            <person name="Spiegel L."/>
            <person name="Sekhon M."/>
            <person name="Murray J."/>
            <person name="Sheet P."/>
            <person name="Cordes M."/>
            <person name="Abu-Threideh J."/>
            <person name="Stoneking T."/>
            <person name="Kalicki J."/>
            <person name="Graves T."/>
            <person name="Harmon G."/>
            <person name="Edwards J."/>
            <person name="Latreille P."/>
            <person name="Courtney L."/>
            <person name="Cloud J."/>
            <person name="Abbott A."/>
            <person name="Scott K."/>
            <person name="Johnson D."/>
            <person name="Minx P."/>
            <person name="Bentley D."/>
            <person name="Fulton B."/>
            <person name="Miller N."/>
            <person name="Greco T."/>
            <person name="Kemp K."/>
            <person name="Kramer J."/>
            <person name="Fulton L."/>
            <person name="Mardis E."/>
            <person name="Dante M."/>
            <person name="Pepin K."/>
            <person name="Hillier L.W."/>
            <person name="Nelson J."/>
            <person name="Spieth J."/>
            <person name="Ryan E."/>
            <person name="Andrews S."/>
            <person name="Geisel C."/>
            <person name="Layman D."/>
            <person name="Du H."/>
            <person name="Ali J."/>
            <person name="Berghoff A."/>
            <person name="Jones K."/>
            <person name="Drone K."/>
            <person name="Cotton M."/>
            <person name="Joshu C."/>
            <person name="Antonoiu B."/>
            <person name="Zidanic M."/>
            <person name="Strong C."/>
            <person name="Sun H."/>
            <person name="Lamar B."/>
            <person name="Yordan C."/>
            <person name="Ma P."/>
            <person name="Zhong J."/>
            <person name="Preston R."/>
            <person name="Vil D."/>
            <person name="Shekher M."/>
            <person name="Matero A."/>
            <person name="Shah R."/>
            <person name="Swaby I.K."/>
            <person name="O'Shaughnessy A."/>
            <person name="Rodriguez M."/>
            <person name="Hoffman J."/>
            <person name="Till S."/>
            <person name="Granat S."/>
            <person name="Shohdy N."/>
            <person name="Hasegawa A."/>
            <person name="Hameed A."/>
            <person name="Lodhi M."/>
            <person name="Johnson A."/>
            <person name="Chen E."/>
            <person name="Marra M.A."/>
            <person name="Martienssen R."/>
            <person name="McCombie W.R."/>
        </authorList>
    </citation>
    <scope>NUCLEOTIDE SEQUENCE [LARGE SCALE GENOMIC DNA]</scope>
    <source>
        <strain>cv. Columbia</strain>
    </source>
</reference>
<reference key="4">
    <citation type="journal article" date="2017" name="Plant J.">
        <title>Araport11: a complete reannotation of the Arabidopsis thaliana reference genome.</title>
        <authorList>
            <person name="Cheng C.Y."/>
            <person name="Krishnakumar V."/>
            <person name="Chan A.P."/>
            <person name="Thibaud-Nissen F."/>
            <person name="Schobel S."/>
            <person name="Town C.D."/>
        </authorList>
    </citation>
    <scope>GENOME REANNOTATION</scope>
    <source>
        <strain>cv. Columbia</strain>
    </source>
</reference>
<reference key="5">
    <citation type="journal article" date="2015" name="Plant Physiol.">
        <title>The apoplastic copper AMINE OXIDASE1 mediates jasmonic acid-induced protoxylem differentiation in Arabidopsis roots.</title>
        <authorList>
            <person name="Ghuge S.A."/>
            <person name="Carucci A."/>
            <person name="Rodrigues-Pousada R.A."/>
            <person name="Tisi A."/>
            <person name="Franchi S."/>
            <person name="Tavladoraki P."/>
            <person name="Angelini R."/>
            <person name="Cona A."/>
        </authorList>
    </citation>
    <scope>FUNCTION</scope>
    <scope>DISRUPTION PHENOTYPE</scope>
    <scope>DEVELOPMENTAL STAGE</scope>
    <scope>INDUCTION BY JASMONIC ACID</scope>
    <scope>TISSUE SPECIFICITY</scope>
    <source>
        <strain>cv. Columbia</strain>
    </source>
</reference>
<gene>
    <name evidence="10" type="primary">AO1</name>
    <name evidence="12" type="ordered locus">At4g14940</name>
    <name evidence="13" type="ORF">dl3510w</name>
    <name evidence="14" type="ORF">FCAALL.145</name>
</gene>